<protein>
    <recommendedName>
        <fullName evidence="1">Small ribosomal subunit protein uS15</fullName>
    </recommendedName>
    <alternativeName>
        <fullName evidence="2">30S ribosomal protein S15</fullName>
    </alternativeName>
</protein>
<accession>B5EMD3</accession>
<reference key="1">
    <citation type="submission" date="2008-08" db="EMBL/GenBank/DDBJ databases">
        <title>Complete sequence of Acidithiobacillus ferrooxidans ATCC 53993.</title>
        <authorList>
            <person name="Lucas S."/>
            <person name="Copeland A."/>
            <person name="Lapidus A."/>
            <person name="Glavina del Rio T."/>
            <person name="Dalin E."/>
            <person name="Tice H."/>
            <person name="Bruce D."/>
            <person name="Goodwin L."/>
            <person name="Pitluck S."/>
            <person name="Sims D."/>
            <person name="Brettin T."/>
            <person name="Detter J.C."/>
            <person name="Han C."/>
            <person name="Kuske C.R."/>
            <person name="Larimer F."/>
            <person name="Land M."/>
            <person name="Hauser L."/>
            <person name="Kyrpides N."/>
            <person name="Lykidis A."/>
            <person name="Borole A.P."/>
        </authorList>
    </citation>
    <scope>NUCLEOTIDE SEQUENCE [LARGE SCALE GENOMIC DNA]</scope>
    <source>
        <strain>ATCC 53993 / BNL-5-31</strain>
    </source>
</reference>
<name>RS15_ACIF5</name>
<proteinExistence type="inferred from homology"/>
<organism>
    <name type="scientific">Acidithiobacillus ferrooxidans (strain ATCC 53993 / BNL-5-31)</name>
    <name type="common">Leptospirillum ferrooxidans (ATCC 53993)</name>
    <dbReference type="NCBI Taxonomy" id="380394"/>
    <lineage>
        <taxon>Bacteria</taxon>
        <taxon>Pseudomonadati</taxon>
        <taxon>Pseudomonadota</taxon>
        <taxon>Acidithiobacillia</taxon>
        <taxon>Acidithiobacillales</taxon>
        <taxon>Acidithiobacillaceae</taxon>
        <taxon>Acidithiobacillus</taxon>
    </lineage>
</organism>
<evidence type="ECO:0000255" key="1">
    <source>
        <dbReference type="HAMAP-Rule" id="MF_01343"/>
    </source>
</evidence>
<evidence type="ECO:0000305" key="2"/>
<feature type="chain" id="PRO_1000143064" description="Small ribosomal subunit protein uS15">
    <location>
        <begin position="1"/>
        <end position="89"/>
    </location>
</feature>
<dbReference type="EMBL" id="CP001132">
    <property type="protein sequence ID" value="ACH82812.1"/>
    <property type="molecule type" value="Genomic_DNA"/>
</dbReference>
<dbReference type="RefSeq" id="WP_009567341.1">
    <property type="nucleotide sequence ID" value="NC_011206.1"/>
</dbReference>
<dbReference type="SMR" id="B5EMD3"/>
<dbReference type="GeneID" id="65279770"/>
<dbReference type="KEGG" id="afe:Lferr_0558"/>
<dbReference type="eggNOG" id="COG0184">
    <property type="taxonomic scope" value="Bacteria"/>
</dbReference>
<dbReference type="HOGENOM" id="CLU_148518_0_0_6"/>
<dbReference type="GO" id="GO:0022627">
    <property type="term" value="C:cytosolic small ribosomal subunit"/>
    <property type="evidence" value="ECO:0007669"/>
    <property type="project" value="TreeGrafter"/>
</dbReference>
<dbReference type="GO" id="GO:0019843">
    <property type="term" value="F:rRNA binding"/>
    <property type="evidence" value="ECO:0007669"/>
    <property type="project" value="UniProtKB-UniRule"/>
</dbReference>
<dbReference type="GO" id="GO:0003735">
    <property type="term" value="F:structural constituent of ribosome"/>
    <property type="evidence" value="ECO:0007669"/>
    <property type="project" value="InterPro"/>
</dbReference>
<dbReference type="GO" id="GO:0006412">
    <property type="term" value="P:translation"/>
    <property type="evidence" value="ECO:0007669"/>
    <property type="project" value="UniProtKB-UniRule"/>
</dbReference>
<dbReference type="CDD" id="cd00353">
    <property type="entry name" value="Ribosomal_S15p_S13e"/>
    <property type="match status" value="1"/>
</dbReference>
<dbReference type="FunFam" id="1.10.287.10:FF:000002">
    <property type="entry name" value="30S ribosomal protein S15"/>
    <property type="match status" value="1"/>
</dbReference>
<dbReference type="Gene3D" id="6.10.250.3130">
    <property type="match status" value="1"/>
</dbReference>
<dbReference type="Gene3D" id="1.10.287.10">
    <property type="entry name" value="S15/NS1, RNA-binding"/>
    <property type="match status" value="1"/>
</dbReference>
<dbReference type="HAMAP" id="MF_01343_B">
    <property type="entry name" value="Ribosomal_uS15_B"/>
    <property type="match status" value="1"/>
</dbReference>
<dbReference type="InterPro" id="IPR000589">
    <property type="entry name" value="Ribosomal_uS15"/>
</dbReference>
<dbReference type="InterPro" id="IPR005290">
    <property type="entry name" value="Ribosomal_uS15_bac-type"/>
</dbReference>
<dbReference type="InterPro" id="IPR009068">
    <property type="entry name" value="uS15_NS1_RNA-bd_sf"/>
</dbReference>
<dbReference type="NCBIfam" id="TIGR00952">
    <property type="entry name" value="S15_bact"/>
    <property type="match status" value="1"/>
</dbReference>
<dbReference type="PANTHER" id="PTHR23321">
    <property type="entry name" value="RIBOSOMAL PROTEIN S15, BACTERIAL AND ORGANELLAR"/>
    <property type="match status" value="1"/>
</dbReference>
<dbReference type="PANTHER" id="PTHR23321:SF26">
    <property type="entry name" value="SMALL RIBOSOMAL SUBUNIT PROTEIN US15M"/>
    <property type="match status" value="1"/>
</dbReference>
<dbReference type="Pfam" id="PF00312">
    <property type="entry name" value="Ribosomal_S15"/>
    <property type="match status" value="1"/>
</dbReference>
<dbReference type="SMART" id="SM01387">
    <property type="entry name" value="Ribosomal_S15"/>
    <property type="match status" value="1"/>
</dbReference>
<dbReference type="SUPFAM" id="SSF47060">
    <property type="entry name" value="S15/NS1 RNA-binding domain"/>
    <property type="match status" value="1"/>
</dbReference>
<dbReference type="PROSITE" id="PS00362">
    <property type="entry name" value="RIBOSOMAL_S15"/>
    <property type="match status" value="1"/>
</dbReference>
<keyword id="KW-0687">Ribonucleoprotein</keyword>
<keyword id="KW-0689">Ribosomal protein</keyword>
<keyword id="KW-0694">RNA-binding</keyword>
<keyword id="KW-0699">rRNA-binding</keyword>
<comment type="function">
    <text evidence="1">One of the primary rRNA binding proteins, it binds directly to 16S rRNA where it helps nucleate assembly of the platform of the 30S subunit by binding and bridging several RNA helices of the 16S rRNA.</text>
</comment>
<comment type="function">
    <text evidence="1">Forms an intersubunit bridge (bridge B4) with the 23S rRNA of the 50S subunit in the ribosome.</text>
</comment>
<comment type="subunit">
    <text evidence="1">Part of the 30S ribosomal subunit. Forms a bridge to the 50S subunit in the 70S ribosome, contacting the 23S rRNA.</text>
</comment>
<comment type="similarity">
    <text evidence="1">Belongs to the universal ribosomal protein uS15 family.</text>
</comment>
<gene>
    <name evidence="1" type="primary">rpsO</name>
    <name type="ordered locus">Lferr_0558</name>
</gene>
<sequence>MALSHDIKAEVVQGYATHVGDTGSPEVQVALLTTRIEGLTDHFKVNKHDHHSRQGLLRMVGQRRKLLDYLKKRDVNRYRTLIERLGLRK</sequence>